<accession>Q63KH5</accession>
<proteinExistence type="evidence at protein level"/>
<evidence type="ECO:0000250" key="1">
    <source>
        <dbReference type="UniProtKB" id="P0DUW5"/>
    </source>
</evidence>
<evidence type="ECO:0000256" key="2">
    <source>
        <dbReference type="SAM" id="MobiDB-lite"/>
    </source>
</evidence>
<evidence type="ECO:0000269" key="3">
    <source>
    </source>
</evidence>
<evidence type="ECO:0000269" key="4">
    <source>
    </source>
</evidence>
<evidence type="ECO:0000269" key="5">
    <source>
    </source>
</evidence>
<evidence type="ECO:0000269" key="6">
    <source>
    </source>
</evidence>
<evidence type="ECO:0000269" key="7">
    <source>
    </source>
</evidence>
<evidence type="ECO:0000269" key="8">
    <source>
    </source>
</evidence>
<evidence type="ECO:0000269" key="9">
    <source>
    </source>
</evidence>
<evidence type="ECO:0000303" key="10">
    <source>
    </source>
</evidence>
<evidence type="ECO:0000303" key="11">
    <source>
    </source>
</evidence>
<evidence type="ECO:0000303" key="12">
    <source>
    </source>
</evidence>
<evidence type="ECO:0000305" key="13"/>
<evidence type="ECO:0000305" key="14">
    <source>
    </source>
</evidence>
<evidence type="ECO:0000305" key="15">
    <source>
    </source>
</evidence>
<evidence type="ECO:0000305" key="16">
    <source>
    </source>
</evidence>
<evidence type="ECO:0000305" key="17">
    <source>
    </source>
</evidence>
<evidence type="ECO:0000312" key="18">
    <source>
        <dbReference type="EMBL" id="CAH38859.1"/>
    </source>
</evidence>
<evidence type="ECO:0007744" key="19">
    <source>
        <dbReference type="PDB" id="3EIR"/>
    </source>
</evidence>
<evidence type="ECO:0007744" key="20">
    <source>
        <dbReference type="PDB" id="3EIT"/>
    </source>
</evidence>
<evidence type="ECO:0007744" key="21">
    <source>
        <dbReference type="PDB" id="3GQM"/>
    </source>
</evidence>
<evidence type="ECO:0007744" key="22">
    <source>
        <dbReference type="PDB" id="4HCN"/>
    </source>
</evidence>
<evidence type="ECO:0007744" key="23">
    <source>
        <dbReference type="PDB" id="4HCP"/>
    </source>
</evidence>
<evidence type="ECO:0007829" key="24">
    <source>
        <dbReference type="PDB" id="3GQM"/>
    </source>
</evidence>
<sequence>MLEHGVMKIPGINNVGKTGQAGGETERIPSTEPLGSSAATSPAGPLGGLPARSSSISNTNRTGENPMITPIISSNLGLKHRVTLRKATLASLMQSLSGESSNRVMWNDRYDTLLIARDPREIKNAIEKSVTDFGGLENYKELTGGADPFALMTPVCGLSANNIFKLMTEKDVPIDPTSIEYLENTSFAEHVNTLDSHKNYVVIVNDGRLGHKFLIDLPALTQGPRTAYIIQSDLGGGALPAVRVEDWISRRGSDPVSLDELNQLLSKDFSKMPDDVQTRLLASILQIDKDPHKVDIKKLHLDGKLRFASHEYDFRQFQRNAQYVAGLG</sequence>
<protein>
    <recommendedName>
        <fullName evidence="13">Protein-glutamine deamidase Cif</fullName>
        <ecNumber evidence="5">3.5.1.44</ecNumber>
    </recommendedName>
    <alternativeName>
        <fullName evidence="11">Cycle-inhibiting factor homolog</fullName>
        <shortName evidence="10 12">CHBP</shortName>
    </alternativeName>
</protein>
<organism>
    <name type="scientific">Burkholderia pseudomallei (strain K96243)</name>
    <dbReference type="NCBI Taxonomy" id="272560"/>
    <lineage>
        <taxon>Bacteria</taxon>
        <taxon>Pseudomonadati</taxon>
        <taxon>Pseudomonadota</taxon>
        <taxon>Betaproteobacteria</taxon>
        <taxon>Burkholderiales</taxon>
        <taxon>Burkholderiaceae</taxon>
        <taxon>Burkholderia</taxon>
        <taxon>pseudomallei group</taxon>
    </lineage>
</organism>
<dbReference type="EC" id="3.5.1.44" evidence="5"/>
<dbReference type="EMBL" id="BX571966">
    <property type="protein sequence ID" value="CAH38859.1"/>
    <property type="molecule type" value="Genomic_DNA"/>
</dbReference>
<dbReference type="RefSeq" id="YP_111397.1">
    <property type="nucleotide sequence ID" value="NC_006351.1"/>
</dbReference>
<dbReference type="PDB" id="3EIR">
    <property type="method" value="X-ray"/>
    <property type="resolution" value="2.10 A"/>
    <property type="chains" value="A/B=48-328"/>
</dbReference>
<dbReference type="PDB" id="3EIT">
    <property type="method" value="X-ray"/>
    <property type="resolution" value="2.56 A"/>
    <property type="chains" value="A/B=48-328"/>
</dbReference>
<dbReference type="PDB" id="3GQM">
    <property type="method" value="X-ray"/>
    <property type="resolution" value="2.10 A"/>
    <property type="chains" value="A/B=67-328"/>
</dbReference>
<dbReference type="PDB" id="4HCN">
    <property type="method" value="X-ray"/>
    <property type="resolution" value="2.60 A"/>
    <property type="chains" value="A=78-328"/>
</dbReference>
<dbReference type="PDB" id="4HCP">
    <property type="method" value="X-ray"/>
    <property type="resolution" value="2.52 A"/>
    <property type="chains" value="A=78-328"/>
</dbReference>
<dbReference type="PDBsum" id="3EIR"/>
<dbReference type="PDBsum" id="3EIT"/>
<dbReference type="PDBsum" id="3GQM"/>
<dbReference type="PDBsum" id="4HCN"/>
<dbReference type="PDBsum" id="4HCP"/>
<dbReference type="SMR" id="Q63KH5"/>
<dbReference type="STRING" id="272560.BPSS1385"/>
<dbReference type="KEGG" id="bps:BPSS1385"/>
<dbReference type="PATRIC" id="fig|272560.6.peg.5616"/>
<dbReference type="eggNOG" id="ENOG5032RCC">
    <property type="taxonomic scope" value="Bacteria"/>
</dbReference>
<dbReference type="EvolutionaryTrace" id="Q63KH5"/>
<dbReference type="PHI-base" id="PHI:4195"/>
<dbReference type="Proteomes" id="UP000000605">
    <property type="component" value="Chromosome 2"/>
</dbReference>
<dbReference type="GO" id="GO:0005576">
    <property type="term" value="C:extracellular region"/>
    <property type="evidence" value="ECO:0007669"/>
    <property type="project" value="UniProtKB-SubCell"/>
</dbReference>
<dbReference type="GO" id="GO:0042025">
    <property type="term" value="C:host cell nucleus"/>
    <property type="evidence" value="ECO:0000250"/>
    <property type="project" value="UniProtKB"/>
</dbReference>
<dbReference type="GO" id="GO:0050568">
    <property type="term" value="F:protein-glutamine glutaminase activity"/>
    <property type="evidence" value="ECO:0000314"/>
    <property type="project" value="UniProtKB"/>
</dbReference>
<dbReference type="GO" id="GO:0090729">
    <property type="term" value="F:toxin activity"/>
    <property type="evidence" value="ECO:0000314"/>
    <property type="project" value="UniProtKB"/>
</dbReference>
<dbReference type="GO" id="GO:0044071">
    <property type="term" value="P:symbiont-mediated perturbation of host cell cycle progression"/>
    <property type="evidence" value="ECO:0000314"/>
    <property type="project" value="UniProtKB"/>
</dbReference>
<dbReference type="GO" id="GO:0085034">
    <property type="term" value="P:symbiont-mediated suppression of host NF-kappaB cascade"/>
    <property type="evidence" value="ECO:0000269"/>
    <property type="project" value="SigSci"/>
</dbReference>
<dbReference type="InterPro" id="IPR032278">
    <property type="entry name" value="Cif"/>
</dbReference>
<dbReference type="Pfam" id="PF16374">
    <property type="entry name" value="CIF"/>
    <property type="match status" value="1"/>
</dbReference>
<keyword id="KW-0002">3D-structure</keyword>
<keyword id="KW-1048">Host nucleus</keyword>
<keyword id="KW-0378">Hydrolase</keyword>
<keyword id="KW-1185">Reference proteome</keyword>
<keyword id="KW-0964">Secreted</keyword>
<keyword id="KW-0800">Toxin</keyword>
<keyword id="KW-0843">Virulence</keyword>
<comment type="function">
    <text evidence="3 4 5 6 7 8 9">Protein-glutamine deamidase effector that inhibits the host cell cycle and other key cellular processes such as the actin network and programmed-cell death (PubMed:19225106, PubMed:19308257, PubMed:20688984). Acts by mediating the side chain deamidation of 'Gln-40' of host NEDD8, converting it to glutamate, thereby abolishing the activity of cullin-RING-based E3 ubiquitin-protein ligase complexes (CRL complexes) (PubMed:20688984, PubMed:21903097). Inactivation of CRL complexes prevents ubiquitination and subsequent degradation of the cyclin-dependent kinase inhibitors CDKN1A/p21 and CDKN1B/p27, leading to G1 and G2 cell cycle arrests in host cells (PubMed:19308257). Deamidation of 'Gln-40' of host NEDD8 also triggers macrophage-specific programmed cell death (PubMed:23175788). Also able to catalyze deamidation of 'Gln-40' of host ubiquitin in vitro; however, NEDD8 constitutes the preferred substrate in vivo (PubMed:20688984). Also regulates the host NF-kappa-B signaling via activation of MAPK/ERK cascade: activation of host MAPK/ERK cascade is independent of CRL complexes inhibition, suggesting that Cif has other host protein targets than NEDD8 (PubMed:28166272, PubMed:29848489).</text>
</comment>
<comment type="catalytic activity">
    <reaction evidence="5">
        <text>L-glutaminyl-[protein] + H2O = L-glutamyl-[protein] + NH4(+)</text>
        <dbReference type="Rhea" id="RHEA:16441"/>
        <dbReference type="Rhea" id="RHEA-COMP:10207"/>
        <dbReference type="Rhea" id="RHEA-COMP:10208"/>
        <dbReference type="ChEBI" id="CHEBI:15377"/>
        <dbReference type="ChEBI" id="CHEBI:28938"/>
        <dbReference type="ChEBI" id="CHEBI:29973"/>
        <dbReference type="ChEBI" id="CHEBI:30011"/>
        <dbReference type="EC" id="3.5.1.44"/>
    </reaction>
    <physiologicalReaction direction="left-to-right" evidence="5">
        <dbReference type="Rhea" id="RHEA:16442"/>
    </physiologicalReaction>
</comment>
<comment type="subcellular location">
    <subcellularLocation>
        <location evidence="4 5">Secreted</location>
    </subcellularLocation>
    <subcellularLocation>
        <location evidence="1">Host nucleus</location>
    </subcellularLocation>
    <text evidence="4 5">Secreted via the type III secretion system (T3SS).</text>
</comment>
<comment type="similarity">
    <text evidence="13">Belongs to the Cif family.</text>
</comment>
<feature type="chain" id="PRO_0000453901" description="Protein-glutamine deamidase Cif">
    <location>
        <begin position="1"/>
        <end position="328"/>
    </location>
</feature>
<feature type="region of interest" description="Disordered" evidence="2">
    <location>
        <begin position="1"/>
        <end position="68"/>
    </location>
</feature>
<feature type="compositionally biased region" description="Polar residues" evidence="2">
    <location>
        <begin position="52"/>
        <end position="63"/>
    </location>
</feature>
<feature type="active site" evidence="14 15 16 17">
    <location>
        <position position="156"/>
    </location>
</feature>
<feature type="active site" evidence="14 16">
    <location>
        <position position="211"/>
    </location>
</feature>
<feature type="active site" evidence="14 16">
    <location>
        <position position="231"/>
    </location>
</feature>
<feature type="mutagenesis site" description="Impaired ability to mediate deamidation of host NEDD8, leading to decreased ability to inhibit the host cell cycle." evidence="7">
    <original>ND</original>
    <variation>AA</variation>
    <location>
        <begin position="107"/>
        <end position="108"/>
    </location>
</feature>
<feature type="mutagenesis site" description="Impaired ability to mediate deamidation of host NEDD8, leading to decreased ability to inhibit the host cell cycle." evidence="7">
    <original>FGGLENYKEL</original>
    <variation>AGGLENAKEA</variation>
    <location>
        <begin position="133"/>
        <end position="142"/>
    </location>
</feature>
<feature type="mutagenesis site" description="Abolished protein-glutamine deamidase activity, leading to impaired ability to inhibit the host cell cycle. Abolished accumulation of the cyclin-dependent kinase inhibitors CDKN1A/p21 and CDKN1B/p27. Abolished ability to activate the host MAPK/ERK cascade." evidence="3 4 5 8 9">
    <original>C</original>
    <variation>S</variation>
    <location>
        <position position="156"/>
    </location>
</feature>
<feature type="mutagenesis site" description="Impaired ability to mediate deamidation of host NEDD8, leading to decreased ability to inhibit the host cell cycle; when associated with A-177." evidence="7">
    <original>N</original>
    <variation>A</variation>
    <location>
        <position position="161"/>
    </location>
</feature>
<feature type="mutagenesis site" description="Impaired ability to mediate deamidation of host NEDD8, leading to decreased ability to inhibit the host cell cycle; when associated with A-161." evidence="7">
    <original>T</original>
    <variation>A</variation>
    <location>
        <position position="177"/>
    </location>
</feature>
<feature type="mutagenesis site" description="Abolished ability to inhibit the host cell cycle." evidence="3">
    <original>H</original>
    <variation>N</variation>
    <location>
        <position position="211"/>
    </location>
</feature>
<feature type="mutagenesis site" description="Abolished ability to inhibit the host cell cycle." evidence="3">
    <original>Q</original>
    <variation>A</variation>
    <location>
        <position position="231"/>
    </location>
</feature>
<feature type="helix" evidence="24">
    <location>
        <begin position="81"/>
        <end position="94"/>
    </location>
</feature>
<feature type="helix" evidence="24">
    <location>
        <begin position="95"/>
        <end position="97"/>
    </location>
</feature>
<feature type="helix" evidence="24">
    <location>
        <begin position="99"/>
        <end position="105"/>
    </location>
</feature>
<feature type="helix" evidence="24">
    <location>
        <begin position="114"/>
        <end position="116"/>
    </location>
</feature>
<feature type="helix" evidence="24">
    <location>
        <begin position="119"/>
        <end position="132"/>
    </location>
</feature>
<feature type="helix" evidence="24">
    <location>
        <begin position="136"/>
        <end position="142"/>
    </location>
</feature>
<feature type="helix" evidence="24">
    <location>
        <begin position="156"/>
        <end position="168"/>
    </location>
</feature>
<feature type="strand" evidence="24">
    <location>
        <begin position="170"/>
        <end position="172"/>
    </location>
</feature>
<feature type="turn" evidence="24">
    <location>
        <begin position="176"/>
        <end position="178"/>
    </location>
</feature>
<feature type="strand" evidence="24">
    <location>
        <begin position="182"/>
        <end position="184"/>
    </location>
</feature>
<feature type="helix" evidence="24">
    <location>
        <begin position="187"/>
        <end position="191"/>
    </location>
</feature>
<feature type="strand" evidence="24">
    <location>
        <begin position="198"/>
        <end position="206"/>
    </location>
</feature>
<feature type="turn" evidence="24">
    <location>
        <begin position="207"/>
        <end position="210"/>
    </location>
</feature>
<feature type="strand" evidence="24">
    <location>
        <begin position="211"/>
        <end position="217"/>
    </location>
</feature>
<feature type="strand" evidence="24">
    <location>
        <begin position="227"/>
        <end position="230"/>
    </location>
</feature>
<feature type="strand" evidence="24">
    <location>
        <begin position="236"/>
        <end position="239"/>
    </location>
</feature>
<feature type="helix" evidence="24">
    <location>
        <begin position="244"/>
        <end position="251"/>
    </location>
</feature>
<feature type="helix" evidence="24">
    <location>
        <begin position="258"/>
        <end position="264"/>
    </location>
</feature>
<feature type="helix" evidence="24">
    <location>
        <begin position="267"/>
        <end position="271"/>
    </location>
</feature>
<feature type="helix" evidence="24">
    <location>
        <begin position="274"/>
        <end position="285"/>
    </location>
</feature>
<feature type="helix" evidence="24">
    <location>
        <begin position="291"/>
        <end position="293"/>
    </location>
</feature>
<feature type="helix" evidence="24">
    <location>
        <begin position="296"/>
        <end position="298"/>
    </location>
</feature>
<feature type="strand" evidence="24">
    <location>
        <begin position="305"/>
        <end position="312"/>
    </location>
</feature>
<feature type="helix" evidence="24">
    <location>
        <begin position="314"/>
        <end position="325"/>
    </location>
</feature>
<name>CIF_BURPS</name>
<gene>
    <name evidence="11" type="primary">cif</name>
    <name evidence="18" type="ordered locus">BPSS1385</name>
</gene>
<reference key="1">
    <citation type="journal article" date="2004" name="Proc. Natl. Acad. Sci. U.S.A.">
        <title>Genomic plasticity of the causative agent of melioidosis, Burkholderia pseudomallei.</title>
        <authorList>
            <person name="Holden M.T.G."/>
            <person name="Titball R.W."/>
            <person name="Peacock S.J."/>
            <person name="Cerdeno-Tarraga A.-M."/>
            <person name="Atkins T."/>
            <person name="Crossman L.C."/>
            <person name="Pitt T."/>
            <person name="Churcher C."/>
            <person name="Mungall K.L."/>
            <person name="Bentley S.D."/>
            <person name="Sebaihia M."/>
            <person name="Thomson N.R."/>
            <person name="Bason N."/>
            <person name="Beacham I.R."/>
            <person name="Brooks K."/>
            <person name="Brown K.A."/>
            <person name="Brown N.F."/>
            <person name="Challis G.L."/>
            <person name="Cherevach I."/>
            <person name="Chillingworth T."/>
            <person name="Cronin A."/>
            <person name="Crossett B."/>
            <person name="Davis P."/>
            <person name="DeShazer D."/>
            <person name="Feltwell T."/>
            <person name="Fraser A."/>
            <person name="Hance Z."/>
            <person name="Hauser H."/>
            <person name="Holroyd S."/>
            <person name="Jagels K."/>
            <person name="Keith K.E."/>
            <person name="Maddison M."/>
            <person name="Moule S."/>
            <person name="Price C."/>
            <person name="Quail M.A."/>
            <person name="Rabbinowitsch E."/>
            <person name="Rutherford K."/>
            <person name="Sanders M."/>
            <person name="Simmonds M."/>
            <person name="Songsivilai S."/>
            <person name="Stevens K."/>
            <person name="Tumapa S."/>
            <person name="Vesaratchavest M."/>
            <person name="Whitehead S."/>
            <person name="Yeats C."/>
            <person name="Barrell B.G."/>
            <person name="Oyston P.C.F."/>
            <person name="Parkhill J."/>
        </authorList>
    </citation>
    <scope>NUCLEOTIDE SEQUENCE [LARGE SCALE GENOMIC DNA]</scope>
    <source>
        <strain>K96243</strain>
    </source>
</reference>
<reference key="2">
    <citation type="journal article" date="2009" name="PLoS ONE">
        <title>Cycle inhibiting factors (CIFs) are a growing family of functional cyclomodulins present in invertebrate and mammal bacterial pathogens.</title>
        <authorList>
            <person name="Jubelin G."/>
            <person name="Chavez C.V."/>
            <person name="Taieb F."/>
            <person name="Banfield M.J."/>
            <person name="Samba-Louaka A."/>
            <person name="Nobe R."/>
            <person name="Nougayrede J.P."/>
            <person name="Zumbihl R."/>
            <person name="Givaudan A."/>
            <person name="Escoubas J.M."/>
            <person name="Oswald E."/>
        </authorList>
    </citation>
    <scope>FUNCTION</scope>
    <scope>ACTIVE SITE</scope>
    <scope>SUBCELLULAR LOCATION</scope>
    <scope>MUTAGENESIS OF CYS-156</scope>
</reference>
<reference key="3">
    <citation type="journal article" date="2010" name="Science">
        <title>Glutamine deamidation and dysfunction of ubiquitin/NEDD8 induced by a bacterial effector family.</title>
        <authorList>
            <person name="Cui J."/>
            <person name="Yao Q."/>
            <person name="Li S."/>
            <person name="Ding X."/>
            <person name="Lu Q."/>
            <person name="Mao H."/>
            <person name="Liu L."/>
            <person name="Zheng N."/>
            <person name="Chen S."/>
            <person name="Shao F."/>
        </authorList>
    </citation>
    <scope>FUNCTION</scope>
    <scope>CATALYTIC ACTIVITY</scope>
    <scope>ACTIVE SITE</scope>
    <scope>SUBCELLULAR LOCATION</scope>
    <scope>MUTAGENESIS OF CYS-156</scope>
</reference>
<reference key="4">
    <citation type="journal article" date="2011" name="J. Mol. Biol.">
        <title>Inhibition of cullin RING ligases by cycle inhibiting factor: evidence for interference with Nedd8-induced conformational control.</title>
        <authorList>
            <person name="Boh B.K."/>
            <person name="Ng M.Y."/>
            <person name="Leck Y.C."/>
            <person name="Shaw B."/>
            <person name="Long J."/>
            <person name="Sun G.W."/>
            <person name="Gan Y.H."/>
            <person name="Searle M.S."/>
            <person name="Layfield R."/>
            <person name="Hagen T."/>
        </authorList>
    </citation>
    <scope>FUNCTION</scope>
</reference>
<reference key="5">
    <citation type="journal article" date="2017" name="PLoS ONE">
        <title>Activation of MAPK/ERK signaling by Burkholderia pseudomallei cycle inhibiting factor (Cif).</title>
        <authorList>
            <person name="Ng M.Y."/>
            <person name="Wang M."/>
            <person name="Casey P.J."/>
            <person name="Gan Y.H."/>
            <person name="Hagen T."/>
        </authorList>
    </citation>
    <scope>FUNCTION</scope>
    <scope>MUTAGENESIS OF CYS-156</scope>
</reference>
<reference key="6">
    <citation type="journal article" date="2018" name="Biol. Open">
        <title>Characterisation of cellular effects of Burkholderia pseudomallei cycle inhibiting factor (Cif).</title>
        <authorList>
            <person name="Ng M.Y."/>
            <person name="Gan Y.H."/>
            <person name="Hagen T."/>
        </authorList>
    </citation>
    <scope>FUNCTION</scope>
    <scope>MUTAGENESIS OF CYS-156</scope>
</reference>
<reference evidence="21" key="7">
    <citation type="journal article" date="2009" name="PLoS ONE">
        <title>Crystal structures of Cif from bacterial pathogens Photorhabdus luminescens and Burkholderia pseudomallei.</title>
        <authorList>
            <person name="Crow A."/>
            <person name="Race P.R."/>
            <person name="Jubelin G."/>
            <person name="Varela Chavez C."/>
            <person name="Escoubas J.M."/>
            <person name="Oswald E."/>
            <person name="Banfield M.J."/>
        </authorList>
    </citation>
    <scope>X-RAY CRYSTALLOGRAPHY (2.10 ANGSTROMS) OF 67-328</scope>
    <scope>ACTIVE SITE</scope>
</reference>
<reference evidence="19 20" key="8">
    <citation type="journal article" date="2009" name="Proc. Natl. Acad. Sci. U.S.A.">
        <title>A bacterial type III effector family uses the papain-like hydrolytic activity to arrest the host cell cycle.</title>
        <authorList>
            <person name="Yao Q."/>
            <person name="Cui J."/>
            <person name="Zhu Y."/>
            <person name="Wang G."/>
            <person name="Hu L."/>
            <person name="Long C."/>
            <person name="Cao R."/>
            <person name="Liu X."/>
            <person name="Huang N."/>
            <person name="Chen S."/>
            <person name="Liu L."/>
            <person name="Shao F."/>
        </authorList>
    </citation>
    <scope>X-RAY CRYSTALLOGRAPHY (2.10 ANGSTROMS) OF 48-328</scope>
    <scope>FUNCTION</scope>
    <scope>ACTIVE SITES</scope>
    <scope>MUTAGENESIS OF CYS-156; HIS-211 AND GLN-231</scope>
</reference>
<reference evidence="22 23" key="9">
    <citation type="journal article" date="2012" name="Proc. Natl. Acad. Sci. U.S.A.">
        <title>Structural mechanism of ubiquitin and NEDD8 deamidation catalyzed by bacterial effectors that induce macrophage-specific apoptosis.</title>
        <authorList>
            <person name="Yao Q."/>
            <person name="Cui J."/>
            <person name="Wang J."/>
            <person name="Li T."/>
            <person name="Wan X."/>
            <person name="Luo T."/>
            <person name="Gong Y.N."/>
            <person name="Xu Y."/>
            <person name="Huang N."/>
            <person name="Shao F."/>
        </authorList>
    </citation>
    <scope>X-RAY CRYSTALLOGRAPHY (2.52 ANGSTROMS) OF 78-328 IN COMPLEX WITH HOST UBIQUITIN AND NEDD8</scope>
    <scope>FUNCTION</scope>
    <scope>MUTAGENESIS OF 107-ASN-ASP-108; 133-PHE--LEU-142; ASN-161 AND THR-177</scope>
</reference>